<reference key="1">
    <citation type="journal article" date="2008" name="J. Bacteriol.">
        <title>Genome sequence of Staphylococcus aureus strain Newman and comparative analysis of staphylococcal genomes: polymorphism and evolution of two major pathogenicity islands.</title>
        <authorList>
            <person name="Baba T."/>
            <person name="Bae T."/>
            <person name="Schneewind O."/>
            <person name="Takeuchi F."/>
            <person name="Hiramatsu K."/>
        </authorList>
    </citation>
    <scope>NUCLEOTIDE SEQUENCE [LARGE SCALE GENOMIC DNA]</scope>
    <source>
        <strain>Newman</strain>
    </source>
</reference>
<protein>
    <recommendedName>
        <fullName evidence="1">Metallothiol transferase FosB</fullName>
        <ecNumber evidence="1">2.5.1.-</ecNumber>
    </recommendedName>
    <alternativeName>
        <fullName evidence="1">Fosfomycin resistance protein</fullName>
    </alternativeName>
</protein>
<proteinExistence type="inferred from homology"/>
<gene>
    <name evidence="1" type="primary">fosB</name>
    <name type="ordered locus">NWMN_2234</name>
</gene>
<feature type="chain" id="PRO_1000073534" description="Metallothiol transferase FosB">
    <location>
        <begin position="1"/>
        <end position="139"/>
    </location>
</feature>
<feature type="domain" description="VOC" evidence="2">
    <location>
        <begin position="4"/>
        <end position="119"/>
    </location>
</feature>
<feature type="active site" description="Proton donor/acceptor" evidence="2">
    <location>
        <position position="115"/>
    </location>
</feature>
<feature type="binding site" evidence="1">
    <location>
        <position position="7"/>
    </location>
    <ligand>
        <name>Mg(2+)</name>
        <dbReference type="ChEBI" id="CHEBI:18420"/>
    </ligand>
</feature>
<feature type="binding site" evidence="1">
    <location>
        <position position="66"/>
    </location>
    <ligand>
        <name>Mg(2+)</name>
        <dbReference type="ChEBI" id="CHEBI:18420"/>
    </ligand>
</feature>
<feature type="binding site" evidence="1">
    <location>
        <position position="115"/>
    </location>
    <ligand>
        <name>Mg(2+)</name>
        <dbReference type="ChEBI" id="CHEBI:18420"/>
    </ligand>
</feature>
<evidence type="ECO:0000255" key="1">
    <source>
        <dbReference type="HAMAP-Rule" id="MF_01512"/>
    </source>
</evidence>
<evidence type="ECO:0000255" key="2">
    <source>
        <dbReference type="PROSITE-ProRule" id="PRU01163"/>
    </source>
</evidence>
<comment type="function">
    <text evidence="1">Metallothiol transferase which confers resistance to fosfomycin by catalyzing the addition of a thiol cofactor to fosfomycin. L-cysteine is probably the physiological thiol donor.</text>
</comment>
<comment type="cofactor">
    <cofactor evidence="1">
        <name>Mg(2+)</name>
        <dbReference type="ChEBI" id="CHEBI:18420"/>
    </cofactor>
</comment>
<comment type="subunit">
    <text evidence="1">Homodimer.</text>
</comment>
<comment type="subcellular location">
    <subcellularLocation>
        <location evidence="1">Cytoplasm</location>
    </subcellularLocation>
</comment>
<comment type="similarity">
    <text evidence="1">Belongs to the fosfomycin resistance protein family. FosB subfamily.</text>
</comment>
<accession>A6QJH4</accession>
<name>FOSB_STAAE</name>
<dbReference type="EC" id="2.5.1.-" evidence="1"/>
<dbReference type="EMBL" id="AP009351">
    <property type="protein sequence ID" value="BAF68506.1"/>
    <property type="molecule type" value="Genomic_DNA"/>
</dbReference>
<dbReference type="RefSeq" id="WP_000920239.1">
    <property type="nucleotide sequence ID" value="NZ_JBBIAE010000004.1"/>
</dbReference>
<dbReference type="SMR" id="A6QJH4"/>
<dbReference type="KEGG" id="sae:NWMN_2234"/>
<dbReference type="HOGENOM" id="CLU_121356_0_0_9"/>
<dbReference type="Proteomes" id="UP000006386">
    <property type="component" value="Chromosome"/>
</dbReference>
<dbReference type="GO" id="GO:0005737">
    <property type="term" value="C:cytoplasm"/>
    <property type="evidence" value="ECO:0007669"/>
    <property type="project" value="UniProtKB-SubCell"/>
</dbReference>
<dbReference type="GO" id="GO:0000287">
    <property type="term" value="F:magnesium ion binding"/>
    <property type="evidence" value="ECO:0007669"/>
    <property type="project" value="UniProtKB-UniRule"/>
</dbReference>
<dbReference type="GO" id="GO:0016765">
    <property type="term" value="F:transferase activity, transferring alkyl or aryl (other than methyl) groups"/>
    <property type="evidence" value="ECO:0007669"/>
    <property type="project" value="UniProtKB-UniRule"/>
</dbReference>
<dbReference type="GO" id="GO:0046677">
    <property type="term" value="P:response to antibiotic"/>
    <property type="evidence" value="ECO:0007669"/>
    <property type="project" value="UniProtKB-UniRule"/>
</dbReference>
<dbReference type="Gene3D" id="3.10.180.10">
    <property type="entry name" value="2,3-Dihydroxybiphenyl 1,2-Dioxygenase, domain 1"/>
    <property type="match status" value="1"/>
</dbReference>
<dbReference type="HAMAP" id="MF_01512">
    <property type="entry name" value="FosB"/>
    <property type="match status" value="1"/>
</dbReference>
<dbReference type="InterPro" id="IPR051332">
    <property type="entry name" value="Fosfomycin_Res_Enzymes"/>
</dbReference>
<dbReference type="InterPro" id="IPR029068">
    <property type="entry name" value="Glyas_Bleomycin-R_OHBP_Dase"/>
</dbReference>
<dbReference type="InterPro" id="IPR004360">
    <property type="entry name" value="Glyas_Fos-R_dOase_dom"/>
</dbReference>
<dbReference type="InterPro" id="IPR022858">
    <property type="entry name" value="Metallothiol_Trafse_FosB"/>
</dbReference>
<dbReference type="InterPro" id="IPR037523">
    <property type="entry name" value="VOC"/>
</dbReference>
<dbReference type="NCBIfam" id="NF000493">
    <property type="entry name" value="Fos_BSH"/>
    <property type="match status" value="1"/>
</dbReference>
<dbReference type="NCBIfam" id="NF003152">
    <property type="entry name" value="PRK04101.1"/>
    <property type="match status" value="1"/>
</dbReference>
<dbReference type="PANTHER" id="PTHR36113:SF6">
    <property type="entry name" value="FOSFOMYCIN RESISTANCE PROTEIN FOSX"/>
    <property type="match status" value="1"/>
</dbReference>
<dbReference type="PANTHER" id="PTHR36113">
    <property type="entry name" value="LYASE, PUTATIVE-RELATED-RELATED"/>
    <property type="match status" value="1"/>
</dbReference>
<dbReference type="Pfam" id="PF00903">
    <property type="entry name" value="Glyoxalase"/>
    <property type="match status" value="1"/>
</dbReference>
<dbReference type="SUPFAM" id="SSF54593">
    <property type="entry name" value="Glyoxalase/Bleomycin resistance protein/Dihydroxybiphenyl dioxygenase"/>
    <property type="match status" value="1"/>
</dbReference>
<dbReference type="PROSITE" id="PS51819">
    <property type="entry name" value="VOC"/>
    <property type="match status" value="1"/>
</dbReference>
<organism>
    <name type="scientific">Staphylococcus aureus (strain Newman)</name>
    <dbReference type="NCBI Taxonomy" id="426430"/>
    <lineage>
        <taxon>Bacteria</taxon>
        <taxon>Bacillati</taxon>
        <taxon>Bacillota</taxon>
        <taxon>Bacilli</taxon>
        <taxon>Bacillales</taxon>
        <taxon>Staphylococcaceae</taxon>
        <taxon>Staphylococcus</taxon>
    </lineage>
</organism>
<keyword id="KW-0046">Antibiotic resistance</keyword>
<keyword id="KW-0963">Cytoplasm</keyword>
<keyword id="KW-0460">Magnesium</keyword>
<keyword id="KW-0479">Metal-binding</keyword>
<keyword id="KW-0808">Transferase</keyword>
<sequence>MLKSINHICFSVRNLNDSIHFYRDILLGKLLLTGKKTAYFELAGLWIALNEEKDIPRNEIHFSYTHIAFTIDDSEFKYWHQRLKDNNVNILEGRVRDIRDRQSIYFTDPDGHKLELHTGTLENRLNYYKEAKPHMTFYK</sequence>